<feature type="chain" id="PRO_0000284072" description="Syntaxin-5">
    <location>
        <begin position="1"/>
        <end position="355"/>
    </location>
</feature>
<feature type="topological domain" description="Cytoplasmic" evidence="4">
    <location>
        <begin position="1"/>
        <end position="333"/>
    </location>
</feature>
<feature type="transmembrane region" description="Helical; Anchor for type IV membrane protein" evidence="4">
    <location>
        <begin position="334"/>
        <end position="354"/>
    </location>
</feature>
<feature type="topological domain" description="Vesicular" evidence="4">
    <location>
        <position position="355"/>
    </location>
</feature>
<feature type="domain" description="t-SNARE coiled-coil homology" evidence="5">
    <location>
        <begin position="263"/>
        <end position="325"/>
    </location>
</feature>
<feature type="region of interest" description="Disordered" evidence="6">
    <location>
        <begin position="28"/>
        <end position="47"/>
    </location>
</feature>
<feature type="coiled-coil region" evidence="4">
    <location>
        <begin position="287"/>
        <end position="318"/>
    </location>
</feature>
<feature type="short sequence motif" description="IxM motif; signal for cargo packaging into COPII-coated vesicles" evidence="2">
    <location>
        <begin position="245"/>
        <end position="247"/>
    </location>
</feature>
<feature type="compositionally biased region" description="Polar residues" evidence="6">
    <location>
        <begin position="28"/>
        <end position="37"/>
    </location>
</feature>
<organism>
    <name type="scientific">Bos taurus</name>
    <name type="common">Bovine</name>
    <dbReference type="NCBI Taxonomy" id="9913"/>
    <lineage>
        <taxon>Eukaryota</taxon>
        <taxon>Metazoa</taxon>
        <taxon>Chordata</taxon>
        <taxon>Craniata</taxon>
        <taxon>Vertebrata</taxon>
        <taxon>Euteleostomi</taxon>
        <taxon>Mammalia</taxon>
        <taxon>Eutheria</taxon>
        <taxon>Laurasiatheria</taxon>
        <taxon>Artiodactyla</taxon>
        <taxon>Ruminantia</taxon>
        <taxon>Pecora</taxon>
        <taxon>Bovidae</taxon>
        <taxon>Bovinae</taxon>
        <taxon>Bos</taxon>
    </lineage>
</organism>
<name>STX5_BOVIN</name>
<reference key="1">
    <citation type="submission" date="2006-09" db="EMBL/GenBank/DDBJ databases">
        <authorList>
            <consortium name="NIH - Mammalian Gene Collection (MGC) project"/>
        </authorList>
    </citation>
    <scope>NUCLEOTIDE SEQUENCE [LARGE SCALE MRNA]</scope>
    <source>
        <strain>Hereford</strain>
        <tissue>Fetal skin</tissue>
    </source>
</reference>
<keyword id="KW-0175">Coiled coil</keyword>
<keyword id="KW-0333">Golgi apparatus</keyword>
<keyword id="KW-0472">Membrane</keyword>
<keyword id="KW-1185">Reference proteome</keyword>
<keyword id="KW-0812">Transmembrane</keyword>
<keyword id="KW-1133">Transmembrane helix</keyword>
<keyword id="KW-0813">Transport</keyword>
<evidence type="ECO:0000250" key="1">
    <source>
        <dbReference type="UniProtKB" id="Q08851"/>
    </source>
</evidence>
<evidence type="ECO:0000250" key="2">
    <source>
        <dbReference type="UniProtKB" id="Q13190"/>
    </source>
</evidence>
<evidence type="ECO:0000250" key="3">
    <source>
        <dbReference type="UniProtKB" id="Q8K1E0"/>
    </source>
</evidence>
<evidence type="ECO:0000255" key="4"/>
<evidence type="ECO:0000255" key="5">
    <source>
        <dbReference type="PROSITE-ProRule" id="PRU00202"/>
    </source>
</evidence>
<evidence type="ECO:0000256" key="6">
    <source>
        <dbReference type="SAM" id="MobiDB-lite"/>
    </source>
</evidence>
<evidence type="ECO:0000305" key="7"/>
<proteinExistence type="evidence at transcript level"/>
<comment type="function">
    <text evidence="1">Mediates endoplasmic reticulum to Golgi transport. Together with p115/USO1 and GM130/GOLGA2, involved in vesicle tethering and fusion at the cis-Golgi membrane to maintain the stacked and inter-connected structure of the Golgi apparatus.</text>
</comment>
<comment type="subunit">
    <text evidence="1 2 3">Part of a ternary complex containing STX5A, NSFL1C and VCP (By similarity). Part of a unique SNARE complex composed of the Golgi SNAREs GOSR1, GOSR2 and YKT6. This complex also includes VTI1A (By similarity). Component of a SNARE complex consisting of STX5, YKT6, GOSR1 and BET1L (By similarity). Interacts with BET1L (By similarity). Interacts with BET1 (By similarity). Interacts with COG4 (By similarity). Interacts with GM130/GOLGA2 (By similarity). Interacts (via IxM motif) with SEC24C and SEC24D; mediates STX5 packaging into COPII-coated vesicles (By similarity). Interacts with VLDLR; this interaction mediates VLDLR translocation from the endoplasmic reticulum to the plasma membrane (By similarity).</text>
</comment>
<comment type="subcellular location">
    <subcellularLocation>
        <location evidence="1">Endoplasmic reticulum-Golgi intermediate compartment membrane</location>
        <topology evidence="4">Single-pass type IV membrane protein</topology>
    </subcellularLocation>
    <subcellularLocation>
        <location evidence="1">Golgi apparatus membrane</location>
    </subcellularLocation>
    <text evidence="1">Localizes throughout the Golgi apparatus, but most abundant in the cis-most cisternae.</text>
</comment>
<comment type="similarity">
    <text evidence="7">Belongs to the syntaxin family.</text>
</comment>
<sequence>MIPRKRYGSKNTDQGVYLGLSKTQVLSPATAGSSSSDIAPLPPPVALVPPPPDTMSCRDRTQEFLSACKSLQSRQNGIQANKPALRAVRQRSEFTLMAKRIGKDLSNTFAKLEKLTILAKRKSLFDDKAVEIEELTYIIKQDINSLNKQIAQLQDFVRAKGSQSGRHLQTHSNTIVVSLQSKLASMSNDFKSVLEVRTENLKQQRSRREQFSRAPVSALPLAPNHLGGGAVVLGAESRASGDVAIDMMDSRTSQQLQLIDEQDSYIQSRADTMQNIESTIVELGSIFQQLAHMVKEQEETIQRIDENVLGAQLDVEAAHSEILKYFQSVTSNRWLMVKIFLILIVFFIIFVVFLA</sequence>
<protein>
    <recommendedName>
        <fullName>Syntaxin-5</fullName>
    </recommendedName>
</protein>
<dbReference type="EMBL" id="BC123843">
    <property type="protein sequence ID" value="AAI23844.1"/>
    <property type="molecule type" value="mRNA"/>
</dbReference>
<dbReference type="RefSeq" id="NP_001068912.1">
    <property type="nucleotide sequence ID" value="NM_001075444.1"/>
</dbReference>
<dbReference type="RefSeq" id="XP_005226961.1">
    <property type="nucleotide sequence ID" value="XM_005226904.3"/>
</dbReference>
<dbReference type="RefSeq" id="XP_005226962.1">
    <property type="nucleotide sequence ID" value="XM_005226905.3"/>
</dbReference>
<dbReference type="RefSeq" id="XP_059738820.1">
    <property type="nucleotide sequence ID" value="XM_059882837.1"/>
</dbReference>
<dbReference type="RefSeq" id="XP_059738821.1">
    <property type="nucleotide sequence ID" value="XM_059882838.1"/>
</dbReference>
<dbReference type="SMR" id="Q08DB5"/>
<dbReference type="FunCoup" id="Q08DB5">
    <property type="interactions" value="4342"/>
</dbReference>
<dbReference type="STRING" id="9913.ENSBTAP00000043848"/>
<dbReference type="PaxDb" id="9913-ENSBTAP00000043848"/>
<dbReference type="Ensembl" id="ENSBTAT00000046561.4">
    <property type="protein sequence ID" value="ENSBTAP00000043848.2"/>
    <property type="gene ID" value="ENSBTAG00000009490.6"/>
</dbReference>
<dbReference type="GeneID" id="510312"/>
<dbReference type="KEGG" id="bta:510312"/>
<dbReference type="CTD" id="6811"/>
<dbReference type="VEuPathDB" id="HostDB:ENSBTAG00000009490"/>
<dbReference type="VGNC" id="VGNC:35441">
    <property type="gene designation" value="STX5"/>
</dbReference>
<dbReference type="eggNOG" id="KOG0812">
    <property type="taxonomic scope" value="Eukaryota"/>
</dbReference>
<dbReference type="GeneTree" id="ENSGT01000000214440"/>
<dbReference type="HOGENOM" id="CLU_044998_0_1_1"/>
<dbReference type="InParanoid" id="Q08DB5"/>
<dbReference type="OMA" id="EHNHNVV"/>
<dbReference type="OrthoDB" id="421009at2759"/>
<dbReference type="TreeFam" id="TF315068"/>
<dbReference type="Reactome" id="R-BTA-204005">
    <property type="pathway name" value="COPII-mediated vesicle transport"/>
</dbReference>
<dbReference type="Reactome" id="R-BTA-5694530">
    <property type="pathway name" value="Cargo concentration in the ER"/>
</dbReference>
<dbReference type="Reactome" id="R-BTA-6807878">
    <property type="pathway name" value="COPI-mediated anterograde transport"/>
</dbReference>
<dbReference type="Reactome" id="R-BTA-6811438">
    <property type="pathway name" value="Intra-Golgi traffic"/>
</dbReference>
<dbReference type="Reactome" id="R-BTA-8980692">
    <property type="pathway name" value="RHOA GTPase cycle"/>
</dbReference>
<dbReference type="Reactome" id="R-BTA-9013106">
    <property type="pathway name" value="RHOC GTPase cycle"/>
</dbReference>
<dbReference type="Reactome" id="R-BTA-9013408">
    <property type="pathway name" value="RHOG GTPase cycle"/>
</dbReference>
<dbReference type="Reactome" id="R-BTA-9609523">
    <property type="pathway name" value="Insertion of tail-anchored proteins into the endoplasmic reticulum membrane"/>
</dbReference>
<dbReference type="Proteomes" id="UP000009136">
    <property type="component" value="Chromosome 29"/>
</dbReference>
<dbReference type="Bgee" id="ENSBTAG00000009490">
    <property type="expression patterns" value="Expressed in saliva-secreting gland and 105 other cell types or tissues"/>
</dbReference>
<dbReference type="GO" id="GO:0005829">
    <property type="term" value="C:cytosol"/>
    <property type="evidence" value="ECO:0007669"/>
    <property type="project" value="GOC"/>
</dbReference>
<dbReference type="GO" id="GO:0012505">
    <property type="term" value="C:endomembrane system"/>
    <property type="evidence" value="ECO:0000318"/>
    <property type="project" value="GO_Central"/>
</dbReference>
<dbReference type="GO" id="GO:0033116">
    <property type="term" value="C:endoplasmic reticulum-Golgi intermediate compartment membrane"/>
    <property type="evidence" value="ECO:0007669"/>
    <property type="project" value="UniProtKB-SubCell"/>
</dbReference>
<dbReference type="GO" id="GO:0000139">
    <property type="term" value="C:Golgi membrane"/>
    <property type="evidence" value="ECO:0000318"/>
    <property type="project" value="GO_Central"/>
</dbReference>
<dbReference type="GO" id="GO:0031201">
    <property type="term" value="C:SNARE complex"/>
    <property type="evidence" value="ECO:0000318"/>
    <property type="project" value="GO_Central"/>
</dbReference>
<dbReference type="GO" id="GO:0031982">
    <property type="term" value="C:vesicle"/>
    <property type="evidence" value="ECO:0007669"/>
    <property type="project" value="Ensembl"/>
</dbReference>
<dbReference type="GO" id="GO:0005484">
    <property type="term" value="F:SNAP receptor activity"/>
    <property type="evidence" value="ECO:0000318"/>
    <property type="project" value="GO_Central"/>
</dbReference>
<dbReference type="GO" id="GO:0000149">
    <property type="term" value="F:SNARE binding"/>
    <property type="evidence" value="ECO:0000318"/>
    <property type="project" value="GO_Central"/>
</dbReference>
<dbReference type="GO" id="GO:0034498">
    <property type="term" value="P:early endosome to Golgi transport"/>
    <property type="evidence" value="ECO:0007669"/>
    <property type="project" value="Ensembl"/>
</dbReference>
<dbReference type="GO" id="GO:0006888">
    <property type="term" value="P:endoplasmic reticulum to Golgi vesicle-mediated transport"/>
    <property type="evidence" value="ECO:0000318"/>
    <property type="project" value="GO_Central"/>
</dbReference>
<dbReference type="GO" id="GO:0090166">
    <property type="term" value="P:Golgi disassembly"/>
    <property type="evidence" value="ECO:0007669"/>
    <property type="project" value="Ensembl"/>
</dbReference>
<dbReference type="GO" id="GO:0006886">
    <property type="term" value="P:intracellular protein transport"/>
    <property type="evidence" value="ECO:0000318"/>
    <property type="project" value="GO_Central"/>
</dbReference>
<dbReference type="GO" id="GO:0045732">
    <property type="term" value="P:positive regulation of protein catabolic process"/>
    <property type="evidence" value="ECO:0007669"/>
    <property type="project" value="Ensembl"/>
</dbReference>
<dbReference type="GO" id="GO:1903358">
    <property type="term" value="P:regulation of Golgi organization"/>
    <property type="evidence" value="ECO:0007669"/>
    <property type="project" value="Ensembl"/>
</dbReference>
<dbReference type="GO" id="GO:0048278">
    <property type="term" value="P:vesicle docking"/>
    <property type="evidence" value="ECO:0000318"/>
    <property type="project" value="GO_Central"/>
</dbReference>
<dbReference type="GO" id="GO:0006906">
    <property type="term" value="P:vesicle fusion"/>
    <property type="evidence" value="ECO:0000318"/>
    <property type="project" value="GO_Central"/>
</dbReference>
<dbReference type="CDD" id="cd15844">
    <property type="entry name" value="SNARE_syntaxin5"/>
    <property type="match status" value="1"/>
</dbReference>
<dbReference type="FunFam" id="1.20.5.110:FF:000187">
    <property type="entry name" value="SNARE domain containing protein"/>
    <property type="match status" value="1"/>
</dbReference>
<dbReference type="FunFam" id="1.20.58.70:FF:000005">
    <property type="entry name" value="syntaxin-5 isoform X1"/>
    <property type="match status" value="1"/>
</dbReference>
<dbReference type="Gene3D" id="1.20.58.70">
    <property type="match status" value="1"/>
</dbReference>
<dbReference type="InterPro" id="IPR010989">
    <property type="entry name" value="SNARE"/>
</dbReference>
<dbReference type="InterPro" id="IPR045242">
    <property type="entry name" value="Syntaxin"/>
</dbReference>
<dbReference type="InterPro" id="IPR021538">
    <property type="entry name" value="Syntaxin-5_N"/>
</dbReference>
<dbReference type="InterPro" id="IPR006012">
    <property type="entry name" value="Syntaxin/epimorphin_CS"/>
</dbReference>
<dbReference type="InterPro" id="IPR000727">
    <property type="entry name" value="T_SNARE_dom"/>
</dbReference>
<dbReference type="PANTHER" id="PTHR19957">
    <property type="entry name" value="SYNTAXIN"/>
    <property type="match status" value="1"/>
</dbReference>
<dbReference type="PANTHER" id="PTHR19957:SF3">
    <property type="entry name" value="SYNTAXIN-5"/>
    <property type="match status" value="1"/>
</dbReference>
<dbReference type="Pfam" id="PF05739">
    <property type="entry name" value="SNARE"/>
    <property type="match status" value="1"/>
</dbReference>
<dbReference type="Pfam" id="PF11416">
    <property type="entry name" value="Syntaxin-5_N"/>
    <property type="match status" value="1"/>
</dbReference>
<dbReference type="SMART" id="SM00397">
    <property type="entry name" value="t_SNARE"/>
    <property type="match status" value="1"/>
</dbReference>
<dbReference type="SUPFAM" id="SSF47661">
    <property type="entry name" value="t-snare proteins"/>
    <property type="match status" value="1"/>
</dbReference>
<dbReference type="PROSITE" id="PS00914">
    <property type="entry name" value="SYNTAXIN"/>
    <property type="match status" value="1"/>
</dbReference>
<dbReference type="PROSITE" id="PS50192">
    <property type="entry name" value="T_SNARE"/>
    <property type="match status" value="1"/>
</dbReference>
<accession>Q08DB5</accession>
<gene>
    <name type="primary">STX5</name>
</gene>